<name>LOLB_MARN8</name>
<dbReference type="EMBL" id="CP000514">
    <property type="protein sequence ID" value="ABM19439.1"/>
    <property type="molecule type" value="Genomic_DNA"/>
</dbReference>
<dbReference type="RefSeq" id="WP_011785826.1">
    <property type="nucleotide sequence ID" value="NC_008740.1"/>
</dbReference>
<dbReference type="SMR" id="A1U370"/>
<dbReference type="STRING" id="351348.Maqu_2363"/>
<dbReference type="GeneID" id="31820377"/>
<dbReference type="KEGG" id="maq:Maqu_2363"/>
<dbReference type="eggNOG" id="COG3017">
    <property type="taxonomic scope" value="Bacteria"/>
</dbReference>
<dbReference type="HOGENOM" id="CLU_092816_2_1_6"/>
<dbReference type="OrthoDB" id="9797618at2"/>
<dbReference type="Proteomes" id="UP000000998">
    <property type="component" value="Chromosome"/>
</dbReference>
<dbReference type="GO" id="GO:0009279">
    <property type="term" value="C:cell outer membrane"/>
    <property type="evidence" value="ECO:0007669"/>
    <property type="project" value="UniProtKB-SubCell"/>
</dbReference>
<dbReference type="GO" id="GO:0044874">
    <property type="term" value="P:lipoprotein localization to outer membrane"/>
    <property type="evidence" value="ECO:0007669"/>
    <property type="project" value="UniProtKB-UniRule"/>
</dbReference>
<dbReference type="GO" id="GO:0015031">
    <property type="term" value="P:protein transport"/>
    <property type="evidence" value="ECO:0007669"/>
    <property type="project" value="UniProtKB-KW"/>
</dbReference>
<dbReference type="CDD" id="cd16326">
    <property type="entry name" value="LolB"/>
    <property type="match status" value="1"/>
</dbReference>
<dbReference type="Gene3D" id="2.50.20.10">
    <property type="entry name" value="Lipoprotein localisation LolA/LolB/LppX"/>
    <property type="match status" value="1"/>
</dbReference>
<dbReference type="HAMAP" id="MF_00233">
    <property type="entry name" value="LolB"/>
    <property type="match status" value="1"/>
</dbReference>
<dbReference type="InterPro" id="IPR029046">
    <property type="entry name" value="LolA/LolB/LppX"/>
</dbReference>
<dbReference type="InterPro" id="IPR004565">
    <property type="entry name" value="OM_lipoprot_LolB"/>
</dbReference>
<dbReference type="NCBIfam" id="TIGR00548">
    <property type="entry name" value="lolB"/>
    <property type="match status" value="1"/>
</dbReference>
<dbReference type="Pfam" id="PF03550">
    <property type="entry name" value="LolB"/>
    <property type="match status" value="1"/>
</dbReference>
<dbReference type="SUPFAM" id="SSF89392">
    <property type="entry name" value="Prokaryotic lipoproteins and lipoprotein localization factors"/>
    <property type="match status" value="1"/>
</dbReference>
<dbReference type="PROSITE" id="PS51257">
    <property type="entry name" value="PROKAR_LIPOPROTEIN"/>
    <property type="match status" value="1"/>
</dbReference>
<organism>
    <name type="scientific">Marinobacter nauticus (strain ATCC 700491 / DSM 11845 / VT8)</name>
    <name type="common">Marinobacter aquaeolei</name>
    <dbReference type="NCBI Taxonomy" id="351348"/>
    <lineage>
        <taxon>Bacteria</taxon>
        <taxon>Pseudomonadati</taxon>
        <taxon>Pseudomonadota</taxon>
        <taxon>Gammaproteobacteria</taxon>
        <taxon>Pseudomonadales</taxon>
        <taxon>Marinobacteraceae</taxon>
        <taxon>Marinobacter</taxon>
    </lineage>
</organism>
<sequence>MIRRLLGVALLTGAITGCTTIQLEPLPEGMTNQPPADWAERSDHLSRFDQWQLRGKLAVKQPSDSGTAIINGWRQQGERYDLSLSSSFLGMGTTRLTGVPGFIELTLANGETYQSSDPETLVAAATGWNLPIDNLAWWVRGLPAPEGDFRLLFDEQHQLAILRQDGWEIRYDRWQPFIDSLPALPARITALNGDKRVRVVISEWQQED</sequence>
<proteinExistence type="inferred from homology"/>
<keyword id="KW-0998">Cell outer membrane</keyword>
<keyword id="KW-0143">Chaperone</keyword>
<keyword id="KW-0449">Lipoprotein</keyword>
<keyword id="KW-0472">Membrane</keyword>
<keyword id="KW-0564">Palmitate</keyword>
<keyword id="KW-0653">Protein transport</keyword>
<keyword id="KW-0732">Signal</keyword>
<keyword id="KW-0813">Transport</keyword>
<reference key="1">
    <citation type="journal article" date="2011" name="Appl. Environ. Microbiol.">
        <title>Genomic potential of Marinobacter aquaeolei, a biogeochemical 'opportunitroph'.</title>
        <authorList>
            <person name="Singer E."/>
            <person name="Webb E.A."/>
            <person name="Nelson W.C."/>
            <person name="Heidelberg J.F."/>
            <person name="Ivanova N."/>
            <person name="Pati A."/>
            <person name="Edwards K.J."/>
        </authorList>
    </citation>
    <scope>NUCLEOTIDE SEQUENCE [LARGE SCALE GENOMIC DNA]</scope>
    <source>
        <strain>ATCC 700491 / DSM 11845 / VT8</strain>
    </source>
</reference>
<comment type="function">
    <text evidence="1">Plays a critical role in the incorporation of lipoproteins in the outer membrane after they are released by the LolA protein.</text>
</comment>
<comment type="subunit">
    <text evidence="1">Monomer.</text>
</comment>
<comment type="subcellular location">
    <subcellularLocation>
        <location evidence="1">Cell outer membrane</location>
        <topology evidence="1">Lipid-anchor</topology>
    </subcellularLocation>
</comment>
<comment type="similarity">
    <text evidence="1">Belongs to the LolB family.</text>
</comment>
<protein>
    <recommendedName>
        <fullName evidence="1">Outer-membrane lipoprotein LolB</fullName>
    </recommendedName>
</protein>
<evidence type="ECO:0000255" key="1">
    <source>
        <dbReference type="HAMAP-Rule" id="MF_00233"/>
    </source>
</evidence>
<gene>
    <name evidence="1" type="primary">lolB</name>
    <name type="ordered locus">Maqu_2363</name>
</gene>
<feature type="signal peptide" evidence="1">
    <location>
        <begin position="1"/>
        <end position="17"/>
    </location>
</feature>
<feature type="chain" id="PRO_1000021664" description="Outer-membrane lipoprotein LolB">
    <location>
        <begin position="18"/>
        <end position="208"/>
    </location>
</feature>
<feature type="lipid moiety-binding region" description="N-palmitoyl cysteine" evidence="1">
    <location>
        <position position="18"/>
    </location>
</feature>
<feature type="lipid moiety-binding region" description="S-diacylglycerol cysteine" evidence="1">
    <location>
        <position position="18"/>
    </location>
</feature>
<accession>A1U370</accession>